<sequence>GLFDIIKKVASVVGLASP</sequence>
<dbReference type="GO" id="GO:0005576">
    <property type="term" value="C:extracellular region"/>
    <property type="evidence" value="ECO:0007669"/>
    <property type="project" value="UniProtKB-SubCell"/>
</dbReference>
<dbReference type="GO" id="GO:0006952">
    <property type="term" value="P:defense response"/>
    <property type="evidence" value="ECO:0007669"/>
    <property type="project" value="UniProtKB-KW"/>
</dbReference>
<dbReference type="InterPro" id="IPR013157">
    <property type="entry name" value="Aurein_antimicrobial_peptide"/>
</dbReference>
<dbReference type="Pfam" id="PF08256">
    <property type="entry name" value="Antimicrobial20"/>
    <property type="match status" value="1"/>
</dbReference>
<organism>
    <name type="scientific">Ranoidea citropa</name>
    <name type="common">Australian Blue Mountains tree frog</name>
    <name type="synonym">Litoria citropa</name>
    <dbReference type="NCBI Taxonomy" id="94770"/>
    <lineage>
        <taxon>Eukaryota</taxon>
        <taxon>Metazoa</taxon>
        <taxon>Chordata</taxon>
        <taxon>Craniata</taxon>
        <taxon>Vertebrata</taxon>
        <taxon>Euteleostomi</taxon>
        <taxon>Amphibia</taxon>
        <taxon>Batrachia</taxon>
        <taxon>Anura</taxon>
        <taxon>Neobatrachia</taxon>
        <taxon>Hyloidea</taxon>
        <taxon>Hylidae</taxon>
        <taxon>Pelodryadinae</taxon>
        <taxon>Ranoidea</taxon>
    </lineage>
</organism>
<reference key="1">
    <citation type="journal article" date="1999" name="Eur. J. Biochem.">
        <title>Host defence peptides from the skin glands of the Australian blue mountains tree-frog Litoria citropa. Solution structure of the antibacterial peptide citropin 1.1.</title>
        <authorList>
            <person name="Wegener K.L."/>
            <person name="Wabnitz P.A."/>
            <person name="Carver J.A."/>
            <person name="Bowie J.H."/>
            <person name="Chia B.C.S."/>
            <person name="Wallace J.C."/>
            <person name="Tyler M.J."/>
        </authorList>
    </citation>
    <scope>PROTEIN SEQUENCE</scope>
    <source>
        <tissue>Skin secretion</tissue>
    </source>
</reference>
<comment type="subcellular location">
    <subcellularLocation>
        <location>Secreted</location>
    </subcellularLocation>
</comment>
<comment type="tissue specificity">
    <text>Expressed by the dorsal and submental skin glands.</text>
</comment>
<accession>P81844</accession>
<protein>
    <recommendedName>
        <fullName>Citropin-1.2.4</fullName>
    </recommendedName>
</protein>
<name>CT124_RANCI</name>
<feature type="peptide" id="PRO_0000043770" description="Citropin-1.2.4">
    <location>
        <begin position="1"/>
        <end position="18"/>
    </location>
</feature>
<proteinExistence type="evidence at protein level"/>
<keyword id="KW-0878">Amphibian defense peptide</keyword>
<keyword id="KW-0903">Direct protein sequencing</keyword>
<keyword id="KW-0964">Secreted</keyword>